<gene>
    <name evidence="1" type="primary">glmM1</name>
    <name type="ordered locus">Shewmr4_1021</name>
</gene>
<protein>
    <recommendedName>
        <fullName evidence="1">Phosphoglucosamine mutase 1</fullName>
        <ecNumber evidence="1">5.4.2.10</ecNumber>
    </recommendedName>
</protein>
<sequence length="445" mass="47583">MSERKFFGTDGIRGKVGSGQMTPELALKLGWAAGRVLSRSGTNKVIIGKDTRISGYMFESALEAGLSAAGLNVMLMGPMPTPAVAYLTRTFRAEAGVVISASHNPYYDNGIKFFSNDGSKLDDNLELEIEAELEKPLECVESHLLGKVSRIEDARGRYIEYCKGNFPADQTLTGLKIVVDCAHGATYHIAPAVFRELGAEVIAIGDKPNGVNINDKVGATSMAKICETVLTEGADLGIALDGDGDRIMMVNSRGEVIDGDQILYILACDAKARGVLRGGVVGTLMSNLGLDLALQALDIPFARSKVGDRYVMELLKELDWRIGGENSGHILNLDHGTTGDGIVAGILVLAAMRRQNATLEQLTAPMEMLPQVLVNVRFEGEHDPLSSDKVKAAQALVESQLGARGRVLLRKSGTEPLIRVMVEGDDHNTVLAHANLIADAVKSAS</sequence>
<organism>
    <name type="scientific">Shewanella sp. (strain MR-4)</name>
    <dbReference type="NCBI Taxonomy" id="60480"/>
    <lineage>
        <taxon>Bacteria</taxon>
        <taxon>Pseudomonadati</taxon>
        <taxon>Pseudomonadota</taxon>
        <taxon>Gammaproteobacteria</taxon>
        <taxon>Alteromonadales</taxon>
        <taxon>Shewanellaceae</taxon>
        <taxon>Shewanella</taxon>
    </lineage>
</organism>
<proteinExistence type="inferred from homology"/>
<name>GLMM1_SHESM</name>
<reference key="1">
    <citation type="submission" date="2006-08" db="EMBL/GenBank/DDBJ databases">
        <title>Complete sequence of Shewanella sp. MR-4.</title>
        <authorList>
            <consortium name="US DOE Joint Genome Institute"/>
            <person name="Copeland A."/>
            <person name="Lucas S."/>
            <person name="Lapidus A."/>
            <person name="Barry K."/>
            <person name="Detter J.C."/>
            <person name="Glavina del Rio T."/>
            <person name="Hammon N."/>
            <person name="Israni S."/>
            <person name="Dalin E."/>
            <person name="Tice H."/>
            <person name="Pitluck S."/>
            <person name="Kiss H."/>
            <person name="Brettin T."/>
            <person name="Bruce D."/>
            <person name="Han C."/>
            <person name="Tapia R."/>
            <person name="Gilna P."/>
            <person name="Schmutz J."/>
            <person name="Larimer F."/>
            <person name="Land M."/>
            <person name="Hauser L."/>
            <person name="Kyrpides N."/>
            <person name="Mikhailova N."/>
            <person name="Nealson K."/>
            <person name="Konstantinidis K."/>
            <person name="Klappenbach J."/>
            <person name="Tiedje J."/>
            <person name="Richardson P."/>
        </authorList>
    </citation>
    <scope>NUCLEOTIDE SEQUENCE [LARGE SCALE GENOMIC DNA]</scope>
    <source>
        <strain>MR-4</strain>
    </source>
</reference>
<keyword id="KW-0413">Isomerase</keyword>
<keyword id="KW-0460">Magnesium</keyword>
<keyword id="KW-0479">Metal-binding</keyword>
<keyword id="KW-0597">Phosphoprotein</keyword>
<evidence type="ECO:0000255" key="1">
    <source>
        <dbReference type="HAMAP-Rule" id="MF_01554"/>
    </source>
</evidence>
<accession>Q0HLG6</accession>
<comment type="function">
    <text evidence="1">Catalyzes the conversion of glucosamine-6-phosphate to glucosamine-1-phosphate.</text>
</comment>
<comment type="catalytic activity">
    <reaction evidence="1">
        <text>alpha-D-glucosamine 1-phosphate = D-glucosamine 6-phosphate</text>
        <dbReference type="Rhea" id="RHEA:23424"/>
        <dbReference type="ChEBI" id="CHEBI:58516"/>
        <dbReference type="ChEBI" id="CHEBI:58725"/>
        <dbReference type="EC" id="5.4.2.10"/>
    </reaction>
</comment>
<comment type="cofactor">
    <cofactor evidence="1">
        <name>Mg(2+)</name>
        <dbReference type="ChEBI" id="CHEBI:18420"/>
    </cofactor>
    <text evidence="1">Binds 1 Mg(2+) ion per subunit.</text>
</comment>
<comment type="PTM">
    <text evidence="1">Activated by phosphorylation.</text>
</comment>
<comment type="similarity">
    <text evidence="1">Belongs to the phosphohexose mutase family.</text>
</comment>
<dbReference type="EC" id="5.4.2.10" evidence="1"/>
<dbReference type="EMBL" id="CP000446">
    <property type="protein sequence ID" value="ABI38101.1"/>
    <property type="molecule type" value="Genomic_DNA"/>
</dbReference>
<dbReference type="RefSeq" id="WP_011621812.1">
    <property type="nucleotide sequence ID" value="NC_008321.1"/>
</dbReference>
<dbReference type="SMR" id="Q0HLG6"/>
<dbReference type="KEGG" id="she:Shewmr4_1021"/>
<dbReference type="HOGENOM" id="CLU_016950_7_0_6"/>
<dbReference type="GO" id="GO:0005829">
    <property type="term" value="C:cytosol"/>
    <property type="evidence" value="ECO:0007669"/>
    <property type="project" value="TreeGrafter"/>
</dbReference>
<dbReference type="GO" id="GO:0000287">
    <property type="term" value="F:magnesium ion binding"/>
    <property type="evidence" value="ECO:0007669"/>
    <property type="project" value="UniProtKB-UniRule"/>
</dbReference>
<dbReference type="GO" id="GO:0008966">
    <property type="term" value="F:phosphoglucosamine mutase activity"/>
    <property type="evidence" value="ECO:0007669"/>
    <property type="project" value="UniProtKB-UniRule"/>
</dbReference>
<dbReference type="GO" id="GO:0004615">
    <property type="term" value="F:phosphomannomutase activity"/>
    <property type="evidence" value="ECO:0007669"/>
    <property type="project" value="TreeGrafter"/>
</dbReference>
<dbReference type="GO" id="GO:0005975">
    <property type="term" value="P:carbohydrate metabolic process"/>
    <property type="evidence" value="ECO:0007669"/>
    <property type="project" value="InterPro"/>
</dbReference>
<dbReference type="GO" id="GO:0009252">
    <property type="term" value="P:peptidoglycan biosynthetic process"/>
    <property type="evidence" value="ECO:0007669"/>
    <property type="project" value="TreeGrafter"/>
</dbReference>
<dbReference type="GO" id="GO:0006048">
    <property type="term" value="P:UDP-N-acetylglucosamine biosynthetic process"/>
    <property type="evidence" value="ECO:0007669"/>
    <property type="project" value="TreeGrafter"/>
</dbReference>
<dbReference type="CDD" id="cd05802">
    <property type="entry name" value="GlmM"/>
    <property type="match status" value="1"/>
</dbReference>
<dbReference type="FunFam" id="3.30.310.50:FF:000001">
    <property type="entry name" value="Phosphoglucosamine mutase"/>
    <property type="match status" value="1"/>
</dbReference>
<dbReference type="FunFam" id="3.40.120.10:FF:000001">
    <property type="entry name" value="Phosphoglucosamine mutase"/>
    <property type="match status" value="1"/>
</dbReference>
<dbReference type="FunFam" id="3.40.120.10:FF:000003">
    <property type="entry name" value="Phosphoglucosamine mutase"/>
    <property type="match status" value="1"/>
</dbReference>
<dbReference type="Gene3D" id="3.40.120.10">
    <property type="entry name" value="Alpha-D-Glucose-1,6-Bisphosphate, subunit A, domain 3"/>
    <property type="match status" value="3"/>
</dbReference>
<dbReference type="Gene3D" id="3.30.310.50">
    <property type="entry name" value="Alpha-D-phosphohexomutase, C-terminal domain"/>
    <property type="match status" value="1"/>
</dbReference>
<dbReference type="HAMAP" id="MF_01554_B">
    <property type="entry name" value="GlmM_B"/>
    <property type="match status" value="1"/>
</dbReference>
<dbReference type="InterPro" id="IPR005844">
    <property type="entry name" value="A-D-PHexomutase_a/b/a-I"/>
</dbReference>
<dbReference type="InterPro" id="IPR016055">
    <property type="entry name" value="A-D-PHexomutase_a/b/a-I/II/III"/>
</dbReference>
<dbReference type="InterPro" id="IPR005845">
    <property type="entry name" value="A-D-PHexomutase_a/b/a-II"/>
</dbReference>
<dbReference type="InterPro" id="IPR005846">
    <property type="entry name" value="A-D-PHexomutase_a/b/a-III"/>
</dbReference>
<dbReference type="InterPro" id="IPR005843">
    <property type="entry name" value="A-D-PHexomutase_C"/>
</dbReference>
<dbReference type="InterPro" id="IPR036900">
    <property type="entry name" value="A-D-PHexomutase_C_sf"/>
</dbReference>
<dbReference type="InterPro" id="IPR016066">
    <property type="entry name" value="A-D-PHexomutase_CS"/>
</dbReference>
<dbReference type="InterPro" id="IPR005841">
    <property type="entry name" value="Alpha-D-phosphohexomutase_SF"/>
</dbReference>
<dbReference type="InterPro" id="IPR006352">
    <property type="entry name" value="GlmM_bact"/>
</dbReference>
<dbReference type="InterPro" id="IPR050060">
    <property type="entry name" value="Phosphoglucosamine_mutase"/>
</dbReference>
<dbReference type="NCBIfam" id="TIGR01455">
    <property type="entry name" value="glmM"/>
    <property type="match status" value="1"/>
</dbReference>
<dbReference type="NCBIfam" id="NF008139">
    <property type="entry name" value="PRK10887.1"/>
    <property type="match status" value="1"/>
</dbReference>
<dbReference type="PANTHER" id="PTHR42946:SF1">
    <property type="entry name" value="PHOSPHOGLUCOMUTASE (ALPHA-D-GLUCOSE-1,6-BISPHOSPHATE-DEPENDENT)"/>
    <property type="match status" value="1"/>
</dbReference>
<dbReference type="PANTHER" id="PTHR42946">
    <property type="entry name" value="PHOSPHOHEXOSE MUTASE"/>
    <property type="match status" value="1"/>
</dbReference>
<dbReference type="Pfam" id="PF02878">
    <property type="entry name" value="PGM_PMM_I"/>
    <property type="match status" value="1"/>
</dbReference>
<dbReference type="Pfam" id="PF02879">
    <property type="entry name" value="PGM_PMM_II"/>
    <property type="match status" value="1"/>
</dbReference>
<dbReference type="Pfam" id="PF02880">
    <property type="entry name" value="PGM_PMM_III"/>
    <property type="match status" value="1"/>
</dbReference>
<dbReference type="Pfam" id="PF00408">
    <property type="entry name" value="PGM_PMM_IV"/>
    <property type="match status" value="1"/>
</dbReference>
<dbReference type="PRINTS" id="PR00509">
    <property type="entry name" value="PGMPMM"/>
</dbReference>
<dbReference type="SUPFAM" id="SSF55957">
    <property type="entry name" value="Phosphoglucomutase, C-terminal domain"/>
    <property type="match status" value="1"/>
</dbReference>
<dbReference type="SUPFAM" id="SSF53738">
    <property type="entry name" value="Phosphoglucomutase, first 3 domains"/>
    <property type="match status" value="3"/>
</dbReference>
<dbReference type="PROSITE" id="PS00710">
    <property type="entry name" value="PGM_PMM"/>
    <property type="match status" value="1"/>
</dbReference>
<feature type="chain" id="PRO_0000305675" description="Phosphoglucosamine mutase 1">
    <location>
        <begin position="1"/>
        <end position="445"/>
    </location>
</feature>
<feature type="active site" description="Phosphoserine intermediate" evidence="1">
    <location>
        <position position="102"/>
    </location>
</feature>
<feature type="binding site" description="via phosphate group" evidence="1">
    <location>
        <position position="102"/>
    </location>
    <ligand>
        <name>Mg(2+)</name>
        <dbReference type="ChEBI" id="CHEBI:18420"/>
    </ligand>
</feature>
<feature type="binding site" evidence="1">
    <location>
        <position position="241"/>
    </location>
    <ligand>
        <name>Mg(2+)</name>
        <dbReference type="ChEBI" id="CHEBI:18420"/>
    </ligand>
</feature>
<feature type="binding site" evidence="1">
    <location>
        <position position="243"/>
    </location>
    <ligand>
        <name>Mg(2+)</name>
        <dbReference type="ChEBI" id="CHEBI:18420"/>
    </ligand>
</feature>
<feature type="binding site" evidence="1">
    <location>
        <position position="245"/>
    </location>
    <ligand>
        <name>Mg(2+)</name>
        <dbReference type="ChEBI" id="CHEBI:18420"/>
    </ligand>
</feature>
<feature type="modified residue" description="Phosphoserine" evidence="1">
    <location>
        <position position="102"/>
    </location>
</feature>